<comment type="function">
    <text evidence="1">Exhibits ester hydrolase activity on the substrate p-nitrophenyl acetate, in vitro. May regulate DNA damage and repair by regulating HIF1A degradation via chaperone-mediated autophagy (CMA).</text>
</comment>
<comment type="cofactor">
    <cofactor evidence="1">
        <name>Zn(2+)</name>
        <dbReference type="ChEBI" id="CHEBI:29105"/>
    </cofactor>
</comment>
<comment type="subunit">
    <text evidence="1">Monomer.</text>
</comment>
<comment type="subcellular location">
    <subcellularLocation>
        <location evidence="1">Nucleus</location>
    </subcellularLocation>
    <subcellularLocation>
        <location evidence="1">Cytoplasm</location>
    </subcellularLocation>
    <text evidence="1">Mainly located in the cytoplasm.</text>
</comment>
<organism>
    <name type="scientific">Danio rerio</name>
    <name type="common">Zebrafish</name>
    <name type="synonym">Brachydanio rerio</name>
    <dbReference type="NCBI Taxonomy" id="7955"/>
    <lineage>
        <taxon>Eukaryota</taxon>
        <taxon>Metazoa</taxon>
        <taxon>Chordata</taxon>
        <taxon>Craniata</taxon>
        <taxon>Vertebrata</taxon>
        <taxon>Euteleostomi</taxon>
        <taxon>Actinopterygii</taxon>
        <taxon>Neopterygii</taxon>
        <taxon>Teleostei</taxon>
        <taxon>Ostariophysi</taxon>
        <taxon>Cypriniformes</taxon>
        <taxon>Danionidae</taxon>
        <taxon>Danioninae</taxon>
        <taxon>Danio</taxon>
    </lineage>
</organism>
<dbReference type="EC" id="3.1.-.-" evidence="1"/>
<dbReference type="EMBL" id="BC056539">
    <property type="protein sequence ID" value="AAH56539.1"/>
    <property type="molecule type" value="mRNA"/>
</dbReference>
<dbReference type="EMBL" id="BC067627">
    <property type="protein sequence ID" value="AAH67627.1"/>
    <property type="molecule type" value="mRNA"/>
</dbReference>
<dbReference type="RefSeq" id="NP_997781.1">
    <property type="nucleotide sequence ID" value="NM_212616.1"/>
</dbReference>
<dbReference type="SMR" id="Q6NWE0"/>
<dbReference type="FunCoup" id="Q6NWE0">
    <property type="interactions" value="1095"/>
</dbReference>
<dbReference type="STRING" id="7955.ENSDARP00000148836"/>
<dbReference type="PaxDb" id="7955-ENSDARP00000038075"/>
<dbReference type="Ensembl" id="ENSDART00000180089">
    <property type="protein sequence ID" value="ENSDARP00000148836"/>
    <property type="gene ID" value="ENSDARG00000110147"/>
</dbReference>
<dbReference type="GeneID" id="322350"/>
<dbReference type="KEGG" id="dre:322350"/>
<dbReference type="AGR" id="ZFIN:ZDB-GENE-030131-1069"/>
<dbReference type="ZFIN" id="ZDB-GENE-030131-1069">
    <property type="gene designation" value="zgc:85789"/>
</dbReference>
<dbReference type="eggNOG" id="KOG4048">
    <property type="taxonomic scope" value="Eukaryota"/>
</dbReference>
<dbReference type="HOGENOM" id="CLU_055541_0_0_1"/>
<dbReference type="InParanoid" id="Q6NWE0"/>
<dbReference type="OMA" id="YHIMPDF"/>
<dbReference type="OrthoDB" id="5119241at2759"/>
<dbReference type="PhylomeDB" id="Q6NWE0"/>
<dbReference type="PRO" id="PR:Q6NWE0"/>
<dbReference type="Proteomes" id="UP000000437">
    <property type="component" value="Chromosome 5"/>
</dbReference>
<dbReference type="Bgee" id="ENSDARG00000110147">
    <property type="expression patterns" value="Expressed in liver and 32 other cell types or tissues"/>
</dbReference>
<dbReference type="GO" id="GO:0005737">
    <property type="term" value="C:cytoplasm"/>
    <property type="evidence" value="ECO:0007669"/>
    <property type="project" value="UniProtKB-SubCell"/>
</dbReference>
<dbReference type="GO" id="GO:0005634">
    <property type="term" value="C:nucleus"/>
    <property type="evidence" value="ECO:0000318"/>
    <property type="project" value="GO_Central"/>
</dbReference>
<dbReference type="GO" id="GO:0016788">
    <property type="term" value="F:hydrolase activity, acting on ester bonds"/>
    <property type="evidence" value="ECO:0000250"/>
    <property type="project" value="UniProtKB"/>
</dbReference>
<dbReference type="GO" id="GO:0008270">
    <property type="term" value="F:zinc ion binding"/>
    <property type="evidence" value="ECO:0000250"/>
    <property type="project" value="UniProtKB"/>
</dbReference>
<dbReference type="GO" id="GO:0006974">
    <property type="term" value="P:DNA damage response"/>
    <property type="evidence" value="ECO:0000250"/>
    <property type="project" value="UniProtKB"/>
</dbReference>
<dbReference type="GO" id="GO:0006282">
    <property type="term" value="P:regulation of DNA repair"/>
    <property type="evidence" value="ECO:0000250"/>
    <property type="project" value="UniProtKB"/>
</dbReference>
<dbReference type="CDD" id="cd17298">
    <property type="entry name" value="DUF1907"/>
    <property type="match status" value="1"/>
</dbReference>
<dbReference type="InterPro" id="IPR015021">
    <property type="entry name" value="C11orf54_DUF1907"/>
</dbReference>
<dbReference type="PANTHER" id="PTHR13204:SF1">
    <property type="entry name" value="ESTER HYDROLASE C11ORF54"/>
    <property type="match status" value="1"/>
</dbReference>
<dbReference type="PANTHER" id="PTHR13204">
    <property type="entry name" value="PTD012 PROTEIN"/>
    <property type="match status" value="1"/>
</dbReference>
<dbReference type="Pfam" id="PF08925">
    <property type="entry name" value="DUF1907"/>
    <property type="match status" value="1"/>
</dbReference>
<dbReference type="SMART" id="SM01168">
    <property type="entry name" value="DUF1907"/>
    <property type="match status" value="1"/>
</dbReference>
<dbReference type="SUPFAM" id="SSF117856">
    <property type="entry name" value="AF0104/ALDC/Ptd012-like"/>
    <property type="match status" value="1"/>
</dbReference>
<sequence length="319" mass="35238">MDNSGKTEKFQLHVPNLEELCQVLESGLNKNFSDVKVSVTDCPDLTQQPFGFPVKGLCGKPRITDVGGVPNLIPLVKLDKVYNMNSVSKEVELPGAFILGAGAISFKTAGINGELMPLVLTEAEGRSAVNASYFSSINPEDGKCLQEKYSDRFDDCDFGLLANLYACEGKPGKVIEVKACRRTGEDSLVSCMRKTMAEHYGEKSVALGGTFIIQKGKAKIHIMPREFSVCPLNTDEDVNNWLRHFEVSAPLIFQTVMISRDPGLDLRVEHTHGFSHHGEGGHYYTDTTPNTVEYLGYFLPAETVYRIDRPTETHNVGRD</sequence>
<keyword id="KW-0963">Cytoplasm</keyword>
<keyword id="KW-0378">Hydrolase</keyword>
<keyword id="KW-0479">Metal-binding</keyword>
<keyword id="KW-0539">Nucleus</keyword>
<keyword id="KW-1185">Reference proteome</keyword>
<keyword id="KW-0862">Zinc</keyword>
<proteinExistence type="evidence at transcript level"/>
<protein>
    <recommendedName>
        <fullName>Ester hydrolase C11orf54 homolog</fullName>
        <ecNumber evidence="1">3.1.-.-</ecNumber>
    </recommendedName>
</protein>
<name>CK054_DANRE</name>
<reference key="1">
    <citation type="submission" date="2004-03" db="EMBL/GenBank/DDBJ databases">
        <authorList>
            <consortium name="NIH - Zebrafish Gene Collection (ZGC) project"/>
        </authorList>
    </citation>
    <scope>NUCLEOTIDE SEQUENCE [LARGE SCALE MRNA]</scope>
    <source>
        <tissue>Kidney</tissue>
    </source>
</reference>
<gene>
    <name type="ORF">zgc:85789</name>
</gene>
<feature type="chain" id="PRO_0000246032" description="Ester hydrolase C11orf54 homolog">
    <location>
        <begin position="1"/>
        <end position="319"/>
    </location>
</feature>
<feature type="binding site" evidence="1">
    <location>
        <position position="270"/>
    </location>
    <ligand>
        <name>Zn(2+)</name>
        <dbReference type="ChEBI" id="CHEBI:29105"/>
        <note>catalytic</note>
    </ligand>
</feature>
<feature type="binding site" evidence="1">
    <location>
        <position position="272"/>
    </location>
    <ligand>
        <name>Zn(2+)</name>
        <dbReference type="ChEBI" id="CHEBI:29105"/>
        <note>catalytic</note>
    </ligand>
</feature>
<feature type="binding site" evidence="1">
    <location>
        <position position="282"/>
    </location>
    <ligand>
        <name>Zn(2+)</name>
        <dbReference type="ChEBI" id="CHEBI:29105"/>
        <note>catalytic</note>
    </ligand>
</feature>
<evidence type="ECO:0000250" key="1">
    <source>
        <dbReference type="UniProtKB" id="Q9H0W9"/>
    </source>
</evidence>
<accession>Q6NWE0</accession>
<accession>Q6PHI5</accession>